<sequence>MSFAVVRMQKMKSYDLKGIQFHNQRERESKTNPDIDKERSHENYDLVNDEPIDYNERVKEIIESQKVGTRKTRKDAVLVNELIVTSDRHFFERLDPDEQKRFFEESYKLFADRYGKQNIAYATVHVDEKTPHMHLGVVPMRDGKLQGKNVFNRQELLWLQDKFPEHMQKLGFDLQRGEKGSDREHIETSKFKKQTLEKEIDLLENELKNKKSELAILSEEVSGEFKIPVKREKKSVEVPTGKRNLLGIEQKKTVMKSTGNVILKDEVFQDLKQKVKAGAVLQTRVDQLLNTDYAKENQSLKKEVKELRSTNKSLSEENGRLKSTVEHLTNEIESLYVLTKDFLKARTNDLESFKELFGVFVGKVKEKAPRGLFVRQHERSEEKKNTFSLQDVLQRDRELREQRKAKRKKSHDLER</sequence>
<accession>P13015</accession>
<dbReference type="EMBL" id="M63891">
    <property type="protein sequence ID" value="AAA98307.1"/>
    <property type="molecule type" value="Genomic_DNA"/>
</dbReference>
<dbReference type="EMBL" id="X15670">
    <property type="protein sequence ID" value="CAA33717.1"/>
    <property type="molecule type" value="Genomic_DNA"/>
</dbReference>
<dbReference type="PIR" id="S05987">
    <property type="entry name" value="S05987"/>
</dbReference>
<dbReference type="SMR" id="P13015"/>
<dbReference type="GO" id="GO:0003677">
    <property type="term" value="F:DNA binding"/>
    <property type="evidence" value="ECO:0007669"/>
    <property type="project" value="UniProtKB-KW"/>
</dbReference>
<dbReference type="GO" id="GO:0006310">
    <property type="term" value="P:DNA recombination"/>
    <property type="evidence" value="ECO:0007669"/>
    <property type="project" value="InterPro"/>
</dbReference>
<dbReference type="CDD" id="cd17242">
    <property type="entry name" value="MobM_relaxase"/>
    <property type="match status" value="1"/>
</dbReference>
<dbReference type="Gene3D" id="1.20.5.340">
    <property type="match status" value="1"/>
</dbReference>
<dbReference type="Gene3D" id="3.30.930.30">
    <property type="match status" value="1"/>
</dbReference>
<dbReference type="InterPro" id="IPR001668">
    <property type="entry name" value="Mob_Pre"/>
</dbReference>
<dbReference type="NCBIfam" id="NF041497">
    <property type="entry name" value="MobV"/>
    <property type="match status" value="1"/>
</dbReference>
<dbReference type="Pfam" id="PF01076">
    <property type="entry name" value="Mob_Pre"/>
    <property type="match status" value="1"/>
</dbReference>
<protein>
    <recommendedName>
        <fullName>Plasmid recombination enzyme</fullName>
    </recommendedName>
</protein>
<evidence type="ECO:0000256" key="1">
    <source>
        <dbReference type="SAM" id="MobiDB-lite"/>
    </source>
</evidence>
<evidence type="ECO:0000305" key="2"/>
<proteinExistence type="inferred from homology"/>
<gene>
    <name type="primary">pre</name>
</gene>
<reference key="1">
    <citation type="journal article" date="1989" name="Nucleic Acids Res.">
        <title>Similarity of minus origins of replication and flanking open reading frames of plasmids pUB110, pTB913 and pMV158.</title>
        <authorList>
            <person name="van der Lelie D."/>
            <person name="Bron S."/>
            <person name="Venema G."/>
            <person name="Oskam L."/>
        </authorList>
    </citation>
    <scope>NUCLEOTIDE SEQUENCE [GENOMIC DNA]</scope>
</reference>
<feature type="chain" id="PRO_0000068416" description="Plasmid recombination enzyme">
    <location>
        <begin position="1"/>
        <end position="415"/>
    </location>
</feature>
<feature type="region of interest" description="Disordered" evidence="1">
    <location>
        <begin position="20"/>
        <end position="39"/>
    </location>
</feature>
<feature type="compositionally biased region" description="Basic and acidic residues" evidence="1">
    <location>
        <begin position="23"/>
        <end position="39"/>
    </location>
</feature>
<geneLocation type="plasmid">
    <name>pTB913</name>
</geneLocation>
<keyword id="KW-0238">DNA-binding</keyword>
<keyword id="KW-0614">Plasmid</keyword>
<organism>
    <name type="scientific">Bacillus sp</name>
    <dbReference type="NCBI Taxonomy" id="1409"/>
    <lineage>
        <taxon>Bacteria</taxon>
        <taxon>Bacillati</taxon>
        <taxon>Bacillota</taxon>
        <taxon>Bacilli</taxon>
        <taxon>Bacillales</taxon>
        <taxon>Bacillaceae</taxon>
        <taxon>Bacillus</taxon>
    </lineage>
</organism>
<comment type="function">
    <text>The interaction of the RSA site and the pre protein may not only serve a function in plasmid maintenance, but also contribute to the distribution of small antibiotic resistance plasmids among Gram-positive bacteria.</text>
</comment>
<comment type="miscellaneous">
    <text>Contains conserved positively charged amino acids probably involved in the binding of the pre protein to the RSA site.</text>
</comment>
<comment type="similarity">
    <text evidence="2">Belongs to the plasmid mobilization pre family.</text>
</comment>
<name>PRE_BACSP</name>